<sequence>MHPEPAPPPNNSNPELPLSGGSSTSGSRRSRRRSGDGEPTGAPPLPPPPAVSYPDWIGQSYSEVMSLNEHSMQALSWRKLYLSRAKLKASSRTSALLSGFAMVAMVEVQLDTDHDYPPGLLIVFSACTTVLVAVHLFALMISTCILPNIEAVSNVHNLNSVKESPHERMHRHIELAWAFSTVIGTLLFLAEVVLLCWVKFLPLKRQAGQPSPTKPPTEPAVVVANSSNNGGITPGEAAAIASTAIMVPCGLVFIVFAVHFYRSLVSHKTDRQFQELNELAEFARLQDQLDHRGDHSLTPGTHYA</sequence>
<gene>
    <name type="primary">Orai1</name>
    <name type="synonym">Cracm1</name>
    <name type="synonym">Tmem142a</name>
</gene>
<name>ORAI1_RAT</name>
<reference key="1">
    <citation type="journal article" date="2004" name="Genome Res.">
        <title>The status, quality, and expansion of the NIH full-length cDNA project: the Mammalian Gene Collection (MGC).</title>
        <authorList>
            <consortium name="The MGC Project Team"/>
        </authorList>
    </citation>
    <scope>NUCLEOTIDE SEQUENCE [LARGE SCALE MRNA]</scope>
    <source>
        <tissue>Liver</tissue>
    </source>
</reference>
<reference key="2">
    <citation type="journal article" date="2012" name="J. Biol. Chem.">
        <title>Crystal structure of calmodulin binding domain of orai1 in complex with Ca2+ calmodulin displays a unique binding mode.</title>
        <authorList>
            <person name="Liu Y."/>
            <person name="Zheng X."/>
            <person name="Mueller G.A."/>
            <person name="Sobhany M."/>
            <person name="DeRose E.F."/>
            <person name="Zhang Y."/>
            <person name="London R.E."/>
            <person name="Birnbaumer L."/>
        </authorList>
    </citation>
    <scope>INTERACTION WITH CALM</scope>
</reference>
<dbReference type="EMBL" id="BC088225">
    <property type="protein sequence ID" value="AAH88225.1"/>
    <property type="molecule type" value="mRNA"/>
</dbReference>
<dbReference type="RefSeq" id="NP_001014004.1">
    <property type="nucleotide sequence ID" value="NM_001013982.1"/>
</dbReference>
<dbReference type="BMRB" id="Q5M848"/>
<dbReference type="SMR" id="Q5M848"/>
<dbReference type="CORUM" id="Q5M848"/>
<dbReference type="FunCoup" id="Q5M848">
    <property type="interactions" value="484"/>
</dbReference>
<dbReference type="IntAct" id="Q5M848">
    <property type="interactions" value="2"/>
</dbReference>
<dbReference type="STRING" id="10116.ENSRNOP00000001806"/>
<dbReference type="BindingDB" id="Q5M848"/>
<dbReference type="ChEMBL" id="CHEMBL3721308"/>
<dbReference type="GlyCosmos" id="Q5M848">
    <property type="glycosylation" value="1 site, No reported glycans"/>
</dbReference>
<dbReference type="GlyGen" id="Q5M848">
    <property type="glycosylation" value="1 site"/>
</dbReference>
<dbReference type="PhosphoSitePlus" id="Q5M848"/>
<dbReference type="PaxDb" id="10116-ENSRNOP00000001806"/>
<dbReference type="GeneID" id="304496"/>
<dbReference type="KEGG" id="rno:304496"/>
<dbReference type="UCSC" id="RGD:1311873">
    <property type="organism name" value="rat"/>
</dbReference>
<dbReference type="AGR" id="RGD:1311873"/>
<dbReference type="CTD" id="84876"/>
<dbReference type="RGD" id="1311873">
    <property type="gene designation" value="Orai1"/>
</dbReference>
<dbReference type="eggNOG" id="KOG4298">
    <property type="taxonomic scope" value="Eukaryota"/>
</dbReference>
<dbReference type="InParanoid" id="Q5M848"/>
<dbReference type="PhylomeDB" id="Q5M848"/>
<dbReference type="PRO" id="PR:Q5M848"/>
<dbReference type="Proteomes" id="UP000002494">
    <property type="component" value="Unplaced"/>
</dbReference>
<dbReference type="GO" id="GO:0016323">
    <property type="term" value="C:basolateral plasma membrane"/>
    <property type="evidence" value="ECO:0000266"/>
    <property type="project" value="RGD"/>
</dbReference>
<dbReference type="GO" id="GO:0030426">
    <property type="term" value="C:growth cone"/>
    <property type="evidence" value="ECO:0000314"/>
    <property type="project" value="RGD"/>
</dbReference>
<dbReference type="GO" id="GO:0016020">
    <property type="term" value="C:membrane"/>
    <property type="evidence" value="ECO:0000266"/>
    <property type="project" value="RGD"/>
</dbReference>
<dbReference type="GO" id="GO:0045121">
    <property type="term" value="C:membrane raft"/>
    <property type="evidence" value="ECO:0000250"/>
    <property type="project" value="UniProtKB"/>
</dbReference>
<dbReference type="GO" id="GO:0005886">
    <property type="term" value="C:plasma membrane"/>
    <property type="evidence" value="ECO:0000250"/>
    <property type="project" value="UniProtKB"/>
</dbReference>
<dbReference type="GO" id="GO:0044853">
    <property type="term" value="C:plasma membrane raft"/>
    <property type="evidence" value="ECO:0000250"/>
    <property type="project" value="UniProtKB"/>
</dbReference>
<dbReference type="GO" id="GO:0005262">
    <property type="term" value="F:calcium channel activity"/>
    <property type="evidence" value="ECO:0000266"/>
    <property type="project" value="RGD"/>
</dbReference>
<dbReference type="GO" id="GO:0005516">
    <property type="term" value="F:calmodulin binding"/>
    <property type="evidence" value="ECO:0007669"/>
    <property type="project" value="UniProtKB-KW"/>
</dbReference>
<dbReference type="GO" id="GO:0042802">
    <property type="term" value="F:identical protein binding"/>
    <property type="evidence" value="ECO:0000266"/>
    <property type="project" value="RGD"/>
</dbReference>
<dbReference type="GO" id="GO:0015279">
    <property type="term" value="F:store-operated calcium channel activity"/>
    <property type="evidence" value="ECO:0000315"/>
    <property type="project" value="RGD"/>
</dbReference>
<dbReference type="GO" id="GO:0002250">
    <property type="term" value="P:adaptive immune response"/>
    <property type="evidence" value="ECO:0007669"/>
    <property type="project" value="UniProtKB-KW"/>
</dbReference>
<dbReference type="GO" id="GO:0070509">
    <property type="term" value="P:calcium ion import"/>
    <property type="evidence" value="ECO:0000266"/>
    <property type="project" value="RGD"/>
</dbReference>
<dbReference type="GO" id="GO:0070588">
    <property type="term" value="P:calcium ion transmembrane transport"/>
    <property type="evidence" value="ECO:0000266"/>
    <property type="project" value="RGD"/>
</dbReference>
<dbReference type="GO" id="GO:1990806">
    <property type="term" value="P:ligand-gated ion channel signaling pathway"/>
    <property type="evidence" value="ECO:0000266"/>
    <property type="project" value="RGD"/>
</dbReference>
<dbReference type="GO" id="GO:0061180">
    <property type="term" value="P:mammary gland epithelium development"/>
    <property type="evidence" value="ECO:0000266"/>
    <property type="project" value="RGD"/>
</dbReference>
<dbReference type="GO" id="GO:0007200">
    <property type="term" value="P:phospholipase C-activating G protein-coupled receptor signaling pathway"/>
    <property type="evidence" value="ECO:0000266"/>
    <property type="project" value="RGD"/>
</dbReference>
<dbReference type="GO" id="GO:0045762">
    <property type="term" value="P:positive regulation of adenylate cyclase activity"/>
    <property type="evidence" value="ECO:0000250"/>
    <property type="project" value="UniProtKB"/>
</dbReference>
<dbReference type="GO" id="GO:0051928">
    <property type="term" value="P:positive regulation of calcium ion transport"/>
    <property type="evidence" value="ECO:0000250"/>
    <property type="project" value="UniProtKB"/>
</dbReference>
<dbReference type="GO" id="GO:0032024">
    <property type="term" value="P:positive regulation of insulin secretion"/>
    <property type="evidence" value="ECO:0000266"/>
    <property type="project" value="RGD"/>
</dbReference>
<dbReference type="GO" id="GO:0051924">
    <property type="term" value="P:regulation of calcium ion transport"/>
    <property type="evidence" value="ECO:0000266"/>
    <property type="project" value="RGD"/>
</dbReference>
<dbReference type="GO" id="GO:0002115">
    <property type="term" value="P:store-operated calcium entry"/>
    <property type="evidence" value="ECO:0000315"/>
    <property type="project" value="RGD"/>
</dbReference>
<dbReference type="FunFam" id="1.20.140.140:FF:000001">
    <property type="entry name" value="Calcium release-activated calcium modulator 1"/>
    <property type="match status" value="1"/>
</dbReference>
<dbReference type="Gene3D" id="1.20.140.140">
    <property type="entry name" value="Calcium release-activated calcium channel protein Orai"/>
    <property type="match status" value="1"/>
</dbReference>
<dbReference type="InterPro" id="IPR012446">
    <property type="entry name" value="CRAC_channel"/>
</dbReference>
<dbReference type="InterPro" id="IPR038350">
    <property type="entry name" value="Orai_sf"/>
</dbReference>
<dbReference type="PANTHER" id="PTHR31501">
    <property type="entry name" value="CALCIUM RELEASE-ACTIVATED CALCIUM CHANNEL PROTEIN 1"/>
    <property type="match status" value="1"/>
</dbReference>
<dbReference type="PANTHER" id="PTHR31501:SF3">
    <property type="entry name" value="CALCIUM RELEASE-ACTIVATED CALCIUM CHANNEL PROTEIN 1"/>
    <property type="match status" value="1"/>
</dbReference>
<dbReference type="Pfam" id="PF07856">
    <property type="entry name" value="Orai-1"/>
    <property type="match status" value="1"/>
</dbReference>
<protein>
    <recommendedName>
        <fullName>Calcium release-activated calcium channel protein 1</fullName>
    </recommendedName>
    <alternativeName>
        <fullName>Protein orai-1</fullName>
    </alternativeName>
    <alternativeName>
        <fullName>Transmembrane protein 142A</fullName>
    </alternativeName>
</protein>
<feature type="chain" id="PRO_0000234383" description="Calcium release-activated calcium channel protein 1">
    <location>
        <begin position="1"/>
        <end position="304"/>
    </location>
</feature>
<feature type="topological domain" description="Cytoplasmic" evidence="1">
    <location>
        <begin position="1"/>
        <end position="88"/>
    </location>
</feature>
<feature type="transmembrane region" description="Helical" evidence="4">
    <location>
        <begin position="89"/>
        <end position="106"/>
    </location>
</feature>
<feature type="topological domain" description="Extracellular" evidence="4">
    <location>
        <begin position="107"/>
        <end position="120"/>
    </location>
</feature>
<feature type="transmembrane region" description="Helical" evidence="4">
    <location>
        <begin position="121"/>
        <end position="141"/>
    </location>
</feature>
<feature type="topological domain" description="Cytoplasmic" evidence="4">
    <location>
        <begin position="142"/>
        <end position="174"/>
    </location>
</feature>
<feature type="transmembrane region" description="Helical" evidence="4">
    <location>
        <begin position="175"/>
        <end position="195"/>
    </location>
</feature>
<feature type="topological domain" description="Extracellular" evidence="4">
    <location>
        <begin position="196"/>
        <end position="237"/>
    </location>
</feature>
<feature type="transmembrane region" description="Helical" evidence="4">
    <location>
        <begin position="238"/>
        <end position="258"/>
    </location>
</feature>
<feature type="topological domain" description="Cytoplasmic" evidence="1">
    <location>
        <begin position="259"/>
        <end position="304"/>
    </location>
</feature>
<feature type="region of interest" description="Disordered" evidence="5">
    <location>
        <begin position="1"/>
        <end position="49"/>
    </location>
</feature>
<feature type="region of interest" description="Required for generation of inwardly rectifying CRAC currents" evidence="3">
    <location>
        <begin position="3"/>
        <end position="49"/>
    </location>
</feature>
<feature type="region of interest" description="AKAP5 association region" evidence="3">
    <location>
        <begin position="39"/>
        <end position="60"/>
    </location>
</feature>
<feature type="region of interest" description="Interaction with STIM1" evidence="3">
    <location>
        <begin position="71"/>
        <end position="91"/>
    </location>
</feature>
<feature type="region of interest" description="Interaction with STIM1" evidence="3">
    <location>
        <begin position="275"/>
        <end position="295"/>
    </location>
</feature>
<feature type="compositionally biased region" description="Pro residues" evidence="5">
    <location>
        <begin position="1"/>
        <end position="11"/>
    </location>
</feature>
<feature type="compositionally biased region" description="Low complexity" evidence="5">
    <location>
        <begin position="12"/>
        <end position="27"/>
    </location>
</feature>
<feature type="site" description="Confers selective permeability to Ca(2+) ions" evidence="3">
    <location>
        <position position="107"/>
    </location>
</feature>
<feature type="modified residue" description="Phosphothreonine" evidence="3">
    <location>
        <position position="298"/>
    </location>
</feature>
<feature type="glycosylation site" description="N-linked (GlcNAc...) asparagine" evidence="4">
    <location>
        <position position="225"/>
    </location>
</feature>
<organism>
    <name type="scientific">Rattus norvegicus</name>
    <name type="common">Rat</name>
    <dbReference type="NCBI Taxonomy" id="10116"/>
    <lineage>
        <taxon>Eukaryota</taxon>
        <taxon>Metazoa</taxon>
        <taxon>Chordata</taxon>
        <taxon>Craniata</taxon>
        <taxon>Vertebrata</taxon>
        <taxon>Euteleostomi</taxon>
        <taxon>Mammalia</taxon>
        <taxon>Eutheria</taxon>
        <taxon>Euarchontoglires</taxon>
        <taxon>Glires</taxon>
        <taxon>Rodentia</taxon>
        <taxon>Myomorpha</taxon>
        <taxon>Muroidea</taxon>
        <taxon>Muridae</taxon>
        <taxon>Murinae</taxon>
        <taxon>Rattus</taxon>
    </lineage>
</organism>
<keyword id="KW-1064">Adaptive immunity</keyword>
<keyword id="KW-0106">Calcium</keyword>
<keyword id="KW-0107">Calcium channel</keyword>
<keyword id="KW-0109">Calcium transport</keyword>
<keyword id="KW-0112">Calmodulin-binding</keyword>
<keyword id="KW-1003">Cell membrane</keyword>
<keyword id="KW-0325">Glycoprotein</keyword>
<keyword id="KW-0391">Immunity</keyword>
<keyword id="KW-0407">Ion channel</keyword>
<keyword id="KW-0406">Ion transport</keyword>
<keyword id="KW-0472">Membrane</keyword>
<keyword id="KW-0597">Phosphoprotein</keyword>
<keyword id="KW-1185">Reference proteome</keyword>
<keyword id="KW-0812">Transmembrane</keyword>
<keyword id="KW-1133">Transmembrane helix</keyword>
<keyword id="KW-0813">Transport</keyword>
<keyword id="KW-0832">Ubl conjugation</keyword>
<evidence type="ECO:0000250" key="1"/>
<evidence type="ECO:0000250" key="2">
    <source>
        <dbReference type="UniProtKB" id="Q8BWG9"/>
    </source>
</evidence>
<evidence type="ECO:0000250" key="3">
    <source>
        <dbReference type="UniProtKB" id="Q96D31"/>
    </source>
</evidence>
<evidence type="ECO:0000255" key="4"/>
<evidence type="ECO:0000256" key="5">
    <source>
        <dbReference type="SAM" id="MobiDB-lite"/>
    </source>
</evidence>
<evidence type="ECO:0000305" key="6"/>
<comment type="function">
    <text evidence="2 3">Pore-forming subunit of two major inward rectifying Ca(2+) channels at the plasma membrane: Ca(2+) release-activated Ca(2+) (CRAC) channels and arachidonate-regulated Ca(2+)-selective (ARC) channels (By similarity). Assembles with ORAI2 and ORAI3 to form hexameric CRAC channels that mediate Ca(2+) influx upon depletion of endoplasmic reticulum Ca(2+) store and channel activation by Ca(2+) sensor STIM1, a process known as store-operated Ca(2+) entry (SOCE). Various pore subunit combinations may account for distinct CRAC channel spatiotemporal and cell-type specific dynamics. ORAI1 mainly contributes to the generation of Ca(2+) plateaus involved in sustained Ca(2+) entry and is dispensable for cytosolic Ca(2+) oscillations, whereas ORAI2 and ORAI3 generate oscillatory patterns. CRAC channels assemble in Ca(2+) signaling microdomains where Ca(2+) influx is coupled to calmodulin and calcineurin signaling and activation of NFAT transcription factors recruited to ORAI1 via AKAP5. Activates NFATC2/NFAT1 and NFATC3/NFAT4-mediated transcriptional responses. CRAC channels are the main pathway for Ca(2+) influx in T cells and promote the immune response to pathogens by activating NFAT-dependent cytokine and chemokine transcription (By similarity). Assembles with ORAI3 to form channels that mediate store-independent Ca(2+) influx in response to inflammatory metabolites arachidonate or its derivative leukotriene C4, termed ARC and LRC channels respectively (By similarity). Plays a prominent role in Ca(2+) influx at the basolateral membrane of mammary epithelial cells independently of the Ca(2+) content of endoplasmic reticulum or Golgi stores. May mediate transepithelial transport of large quantities of Ca(2+) for milk secretion (By similarity).</text>
</comment>
<comment type="catalytic activity">
    <reaction evidence="3">
        <text>Ca(2+)(in) = Ca(2+)(out)</text>
        <dbReference type="Rhea" id="RHEA:29671"/>
        <dbReference type="ChEBI" id="CHEBI:29108"/>
    </reaction>
    <physiologicalReaction direction="right-to-left" evidence="3">
        <dbReference type="Rhea" id="RHEA:29673"/>
    </physiologicalReaction>
</comment>
<comment type="activity regulation">
    <text evidence="3">Oxidation at Cys-196 leads to inactivation of channel activity.</text>
</comment>
<comment type="subunit">
    <text evidence="3">Oligomerizes in homomeric and heteromeric ORAI complexes. Native CRAC channels most likely consist of hexameric ORAI heteromers, implying that diverse ORAI1, ORAI2 and ORAI3 subunit combinations with distinct biophysical properties can operate in a cell-type specific way. ARC channels are heteropentamers consisting of three ORAI1 and two ORAI3 subunits. Interacts with STIM1 and STIM2; this regulates channel activity. Interacts with CALM; this may displace STIM1 and STIM2 and might thereby modulate channel activity. Interacts (via N-terminus) with AKAP5 upon store depletion. Interacts with CRACR2A/EFCAB4B; the interaction is direct and takes place in absence of Ca(2+). Forms a complex with CRACR2A/EFCAB4B and STIM1 at low concentration of Ca(2+), the complex dissociates at elevated Ca(2+) concentrations. Interacts with ASPH (isoform 8). Interacts with SLC35G1. Interacts with UBQLN1. Interacts with ADCY8; interaction is calcium store depletion independent; interaction occurs in membrane raft; interaction increases markedly after store depletion; positively regulates SOCE-induced adenylate cyclase activity; contributes to the targeting of ADCY8 to discrete regions of the plasma membrane that are shielded from other calcium events. Interacts with EFHB; the interaction takes place upon Ca(2+)-store depletion. Interacts (via N- and C-termini) with ATP2C2 (via N-terminus); this interaction regulates Ca(2+) influx at the plasma membrane. Interacts with TSPAN18; this interaction regulates ORAI1 exit from the endoplasmic (ER), and/or Golgi, and trafficking to the cell surface.</text>
</comment>
<comment type="interaction">
    <interactant intactId="EBI-9700451">
        <id>Q5M848</id>
    </interactant>
    <interactant intactId="EBI-9700435">
        <id>D4A5X1</id>
        <label>Stim2</label>
    </interactant>
    <organismsDiffer>false</organismsDiffer>
    <experiments>3</experiments>
</comment>
<comment type="subcellular location">
    <subcellularLocation>
        <location evidence="3">Cell membrane</location>
        <topology evidence="3">Multi-pass membrane protein</topology>
    </subcellularLocation>
    <subcellularLocation>
        <location evidence="2">Basolateral cell membrane</location>
        <topology evidence="3">Multi-pass membrane protein</topology>
    </subcellularLocation>
    <text evidence="3">Colocalizes with STIM1 in membrane punctate structures at ER-PM junctions.</text>
</comment>
<comment type="domain">
    <text evidence="3">The Pro-rich region of ORAI1 (residues 3-49) functionally interacts with the polybasic Lys-rich region of STIM1 (residues 672-685) and regulates CRAC channel gating at negative membrane potentials.</text>
</comment>
<comment type="domain">
    <text evidence="3">AKAP5 association region (AKAR) mediates coupling of ORAI1 to AKAP5-dependent NFATC2/NFAT1 transcriptional responses.</text>
</comment>
<comment type="PTM">
    <text evidence="3">N-glycosylated. N-glycosylation inhibits channel activity in T cells.</text>
</comment>
<comment type="PTM">
    <text evidence="3">Ubiquitinated.</text>
</comment>
<comment type="PTM">
    <text evidence="3">Cys-195 is oxidated, leading to inactivation of channel activity.</text>
</comment>
<comment type="similarity">
    <text evidence="6">Belongs to the Orai family.</text>
</comment>
<comment type="caution">
    <text evidence="3">According to a report, ORAI1 has been shown to colocalize with UBQLN1 in the autophagosome as a target for autophagic degradation; ORAI1 is however not an autophagosomal protein.</text>
</comment>
<proteinExistence type="evidence at protein level"/>
<accession>Q5M848</accession>